<organism>
    <name type="scientific">Burkholderia vietnamiensis (strain G4 / LMG 22486)</name>
    <name type="common">Burkholderia cepacia (strain R1808)</name>
    <dbReference type="NCBI Taxonomy" id="269482"/>
    <lineage>
        <taxon>Bacteria</taxon>
        <taxon>Pseudomonadati</taxon>
        <taxon>Pseudomonadota</taxon>
        <taxon>Betaproteobacteria</taxon>
        <taxon>Burkholderiales</taxon>
        <taxon>Burkholderiaceae</taxon>
        <taxon>Burkholderia</taxon>
        <taxon>Burkholderia cepacia complex</taxon>
    </lineage>
</organism>
<accession>A4JH80</accession>
<protein>
    <recommendedName>
        <fullName evidence="1">Adenylate kinase</fullName>
        <shortName evidence="1">AK</shortName>
        <ecNumber evidence="1">2.7.4.3</ecNumber>
    </recommendedName>
    <alternativeName>
        <fullName evidence="1">ATP-AMP transphosphorylase</fullName>
    </alternativeName>
    <alternativeName>
        <fullName evidence="1">ATP:AMP phosphotransferase</fullName>
    </alternativeName>
    <alternativeName>
        <fullName evidence="1">Adenylate monophosphate kinase</fullName>
    </alternativeName>
</protein>
<reference key="1">
    <citation type="submission" date="2007-03" db="EMBL/GenBank/DDBJ databases">
        <title>Complete sequence of chromosome 1 of Burkholderia vietnamiensis G4.</title>
        <authorList>
            <consortium name="US DOE Joint Genome Institute"/>
            <person name="Copeland A."/>
            <person name="Lucas S."/>
            <person name="Lapidus A."/>
            <person name="Barry K."/>
            <person name="Detter J.C."/>
            <person name="Glavina del Rio T."/>
            <person name="Hammon N."/>
            <person name="Israni S."/>
            <person name="Dalin E."/>
            <person name="Tice H."/>
            <person name="Pitluck S."/>
            <person name="Chain P."/>
            <person name="Malfatti S."/>
            <person name="Shin M."/>
            <person name="Vergez L."/>
            <person name="Schmutz J."/>
            <person name="Larimer F."/>
            <person name="Land M."/>
            <person name="Hauser L."/>
            <person name="Kyrpides N."/>
            <person name="Tiedje J."/>
            <person name="Richardson P."/>
        </authorList>
    </citation>
    <scope>NUCLEOTIDE SEQUENCE [LARGE SCALE GENOMIC DNA]</scope>
    <source>
        <strain>G4 / LMG 22486</strain>
    </source>
</reference>
<comment type="function">
    <text evidence="1">Catalyzes the reversible transfer of the terminal phosphate group between ATP and AMP. Plays an important role in cellular energy homeostasis and in adenine nucleotide metabolism.</text>
</comment>
<comment type="catalytic activity">
    <reaction evidence="1">
        <text>AMP + ATP = 2 ADP</text>
        <dbReference type="Rhea" id="RHEA:12973"/>
        <dbReference type="ChEBI" id="CHEBI:30616"/>
        <dbReference type="ChEBI" id="CHEBI:456215"/>
        <dbReference type="ChEBI" id="CHEBI:456216"/>
        <dbReference type="EC" id="2.7.4.3"/>
    </reaction>
</comment>
<comment type="pathway">
    <text evidence="1">Purine metabolism; AMP biosynthesis via salvage pathway; AMP from ADP: step 1/1.</text>
</comment>
<comment type="subunit">
    <text evidence="1">Monomer.</text>
</comment>
<comment type="subcellular location">
    <subcellularLocation>
        <location evidence="1">Cytoplasm</location>
    </subcellularLocation>
</comment>
<comment type="domain">
    <text evidence="1">Consists of three domains, a large central CORE domain and two small peripheral domains, NMPbind and LID, which undergo movements during catalysis. The LID domain closes over the site of phosphoryl transfer upon ATP binding. Assembling and dissambling the active center during each catalytic cycle provides an effective means to prevent ATP hydrolysis.</text>
</comment>
<comment type="similarity">
    <text evidence="1">Belongs to the adenylate kinase family.</text>
</comment>
<evidence type="ECO:0000255" key="1">
    <source>
        <dbReference type="HAMAP-Rule" id="MF_00235"/>
    </source>
</evidence>
<proteinExistence type="inferred from homology"/>
<gene>
    <name evidence="1" type="primary">adk</name>
    <name type="ordered locus">Bcep1808_2641</name>
</gene>
<feature type="chain" id="PRO_1000058806" description="Adenylate kinase">
    <location>
        <begin position="1"/>
        <end position="220"/>
    </location>
</feature>
<feature type="region of interest" description="NMP" evidence="1">
    <location>
        <begin position="30"/>
        <end position="59"/>
    </location>
</feature>
<feature type="region of interest" description="LID" evidence="1">
    <location>
        <begin position="122"/>
        <end position="159"/>
    </location>
</feature>
<feature type="binding site" evidence="1">
    <location>
        <begin position="10"/>
        <end position="15"/>
    </location>
    <ligand>
        <name>ATP</name>
        <dbReference type="ChEBI" id="CHEBI:30616"/>
    </ligand>
</feature>
<feature type="binding site" evidence="1">
    <location>
        <position position="31"/>
    </location>
    <ligand>
        <name>AMP</name>
        <dbReference type="ChEBI" id="CHEBI:456215"/>
    </ligand>
</feature>
<feature type="binding site" evidence="1">
    <location>
        <position position="36"/>
    </location>
    <ligand>
        <name>AMP</name>
        <dbReference type="ChEBI" id="CHEBI:456215"/>
    </ligand>
</feature>
<feature type="binding site" evidence="1">
    <location>
        <begin position="57"/>
        <end position="59"/>
    </location>
    <ligand>
        <name>AMP</name>
        <dbReference type="ChEBI" id="CHEBI:456215"/>
    </ligand>
</feature>
<feature type="binding site" evidence="1">
    <location>
        <begin position="85"/>
        <end position="88"/>
    </location>
    <ligand>
        <name>AMP</name>
        <dbReference type="ChEBI" id="CHEBI:456215"/>
    </ligand>
</feature>
<feature type="binding site" evidence="1">
    <location>
        <position position="92"/>
    </location>
    <ligand>
        <name>AMP</name>
        <dbReference type="ChEBI" id="CHEBI:456215"/>
    </ligand>
</feature>
<feature type="binding site" evidence="1">
    <location>
        <position position="123"/>
    </location>
    <ligand>
        <name>ATP</name>
        <dbReference type="ChEBI" id="CHEBI:30616"/>
    </ligand>
</feature>
<feature type="binding site" evidence="1">
    <location>
        <begin position="132"/>
        <end position="133"/>
    </location>
    <ligand>
        <name>ATP</name>
        <dbReference type="ChEBI" id="CHEBI:30616"/>
    </ligand>
</feature>
<feature type="binding site" evidence="1">
    <location>
        <position position="156"/>
    </location>
    <ligand>
        <name>AMP</name>
        <dbReference type="ChEBI" id="CHEBI:456215"/>
    </ligand>
</feature>
<feature type="binding site" evidence="1">
    <location>
        <position position="167"/>
    </location>
    <ligand>
        <name>AMP</name>
        <dbReference type="ChEBI" id="CHEBI:456215"/>
    </ligand>
</feature>
<feature type="binding site" evidence="1">
    <location>
        <position position="206"/>
    </location>
    <ligand>
        <name>ATP</name>
        <dbReference type="ChEBI" id="CHEBI:30616"/>
    </ligand>
</feature>
<sequence>MRLILLGAPGAGKGTQANFIKEKFGIPQISTGDMLRAAVKAGSPLGVEAKGYMDAGKLVPDALIIGLVKERLKESDCANGYLFDGFPRTIAQADAMKEAGVAIDYVLEIDVPFSEIVERMSGRRTHAASGRTYHVKFNPPKVEGQDDVTGEPLIQRDDDKEETVKKRLEVYEAQTKPLITYYGDWAQRGEENGLKAPQYRKISGLGSVEEIRERAFEALK</sequence>
<keyword id="KW-0067">ATP-binding</keyword>
<keyword id="KW-0963">Cytoplasm</keyword>
<keyword id="KW-0418">Kinase</keyword>
<keyword id="KW-0545">Nucleotide biosynthesis</keyword>
<keyword id="KW-0547">Nucleotide-binding</keyword>
<keyword id="KW-0808">Transferase</keyword>
<name>KAD_BURVG</name>
<dbReference type="EC" id="2.7.4.3" evidence="1"/>
<dbReference type="EMBL" id="CP000614">
    <property type="protein sequence ID" value="ABO55633.1"/>
    <property type="molecule type" value="Genomic_DNA"/>
</dbReference>
<dbReference type="SMR" id="A4JH80"/>
<dbReference type="KEGG" id="bvi:Bcep1808_2641"/>
<dbReference type="eggNOG" id="COG0563">
    <property type="taxonomic scope" value="Bacteria"/>
</dbReference>
<dbReference type="HOGENOM" id="CLU_032354_1_2_4"/>
<dbReference type="UniPathway" id="UPA00588">
    <property type="reaction ID" value="UER00649"/>
</dbReference>
<dbReference type="Proteomes" id="UP000002287">
    <property type="component" value="Chromosome 1"/>
</dbReference>
<dbReference type="GO" id="GO:0005737">
    <property type="term" value="C:cytoplasm"/>
    <property type="evidence" value="ECO:0007669"/>
    <property type="project" value="UniProtKB-SubCell"/>
</dbReference>
<dbReference type="GO" id="GO:0004017">
    <property type="term" value="F:adenylate kinase activity"/>
    <property type="evidence" value="ECO:0007669"/>
    <property type="project" value="UniProtKB-UniRule"/>
</dbReference>
<dbReference type="GO" id="GO:0005524">
    <property type="term" value="F:ATP binding"/>
    <property type="evidence" value="ECO:0007669"/>
    <property type="project" value="UniProtKB-UniRule"/>
</dbReference>
<dbReference type="GO" id="GO:0044209">
    <property type="term" value="P:AMP salvage"/>
    <property type="evidence" value="ECO:0007669"/>
    <property type="project" value="UniProtKB-UniRule"/>
</dbReference>
<dbReference type="CDD" id="cd01428">
    <property type="entry name" value="ADK"/>
    <property type="match status" value="1"/>
</dbReference>
<dbReference type="FunFam" id="3.40.50.300:FF:000106">
    <property type="entry name" value="Adenylate kinase mitochondrial"/>
    <property type="match status" value="1"/>
</dbReference>
<dbReference type="Gene3D" id="3.40.50.300">
    <property type="entry name" value="P-loop containing nucleotide triphosphate hydrolases"/>
    <property type="match status" value="1"/>
</dbReference>
<dbReference type="HAMAP" id="MF_00235">
    <property type="entry name" value="Adenylate_kinase_Adk"/>
    <property type="match status" value="1"/>
</dbReference>
<dbReference type="InterPro" id="IPR006259">
    <property type="entry name" value="Adenyl_kin_sub"/>
</dbReference>
<dbReference type="InterPro" id="IPR000850">
    <property type="entry name" value="Adenylat/UMP-CMP_kin"/>
</dbReference>
<dbReference type="InterPro" id="IPR033690">
    <property type="entry name" value="Adenylat_kinase_CS"/>
</dbReference>
<dbReference type="InterPro" id="IPR007862">
    <property type="entry name" value="Adenylate_kinase_lid-dom"/>
</dbReference>
<dbReference type="InterPro" id="IPR027417">
    <property type="entry name" value="P-loop_NTPase"/>
</dbReference>
<dbReference type="NCBIfam" id="TIGR01351">
    <property type="entry name" value="adk"/>
    <property type="match status" value="1"/>
</dbReference>
<dbReference type="NCBIfam" id="NF001379">
    <property type="entry name" value="PRK00279.1-1"/>
    <property type="match status" value="1"/>
</dbReference>
<dbReference type="NCBIfam" id="NF001380">
    <property type="entry name" value="PRK00279.1-2"/>
    <property type="match status" value="1"/>
</dbReference>
<dbReference type="NCBIfam" id="NF001381">
    <property type="entry name" value="PRK00279.1-3"/>
    <property type="match status" value="1"/>
</dbReference>
<dbReference type="NCBIfam" id="NF011100">
    <property type="entry name" value="PRK14527.1"/>
    <property type="match status" value="1"/>
</dbReference>
<dbReference type="PANTHER" id="PTHR23359">
    <property type="entry name" value="NUCLEOTIDE KINASE"/>
    <property type="match status" value="1"/>
</dbReference>
<dbReference type="Pfam" id="PF00406">
    <property type="entry name" value="ADK"/>
    <property type="match status" value="1"/>
</dbReference>
<dbReference type="Pfam" id="PF05191">
    <property type="entry name" value="ADK_lid"/>
    <property type="match status" value="1"/>
</dbReference>
<dbReference type="PRINTS" id="PR00094">
    <property type="entry name" value="ADENYLTKNASE"/>
</dbReference>
<dbReference type="SUPFAM" id="SSF52540">
    <property type="entry name" value="P-loop containing nucleoside triphosphate hydrolases"/>
    <property type="match status" value="1"/>
</dbReference>
<dbReference type="PROSITE" id="PS00113">
    <property type="entry name" value="ADENYLATE_KINASE"/>
    <property type="match status" value="1"/>
</dbReference>